<feature type="chain" id="PRO_1000003961" description="Small ribosomal subunit protein uS2">
    <location>
        <begin position="1"/>
        <end position="239"/>
    </location>
</feature>
<proteinExistence type="inferred from homology"/>
<gene>
    <name evidence="1" type="primary">rpsB</name>
    <name type="ordered locus">FTF0313</name>
</gene>
<keyword id="KW-0687">Ribonucleoprotein</keyword>
<keyword id="KW-0689">Ribosomal protein</keyword>
<evidence type="ECO:0000255" key="1">
    <source>
        <dbReference type="HAMAP-Rule" id="MF_00291"/>
    </source>
</evidence>
<evidence type="ECO:0000305" key="2"/>
<protein>
    <recommendedName>
        <fullName evidence="1">Small ribosomal subunit protein uS2</fullName>
    </recommendedName>
    <alternativeName>
        <fullName evidence="2">30S ribosomal protein S2</fullName>
    </alternativeName>
</protein>
<sequence>MSLMKEMLSVGVHFGHKKAFWNPQMKEYIFGINHGVHIINLEKTVPLFQDAVNFVGKTVANGGKILFVGTKRQAQDIVEAEAKRCGMSFVSHRWLGGMLTNYKTVRQSIKRLAQLEKMREDGTLESLTKKEMLQNIRTIEKLEKVLGGIKEMGGLPDAIVVIDSNKEHIAIQEAQKLGIKVVAIVDTNSNPEGIDYIIPGNDDAVKSISFYMKKFADAVIDAQGLDRAVEAKADEAAQA</sequence>
<accession>Q14JD2</accession>
<dbReference type="EMBL" id="AM286280">
    <property type="protein sequence ID" value="CAL08329.1"/>
    <property type="molecule type" value="Genomic_DNA"/>
</dbReference>
<dbReference type="RefSeq" id="WP_003021616.1">
    <property type="nucleotide sequence ID" value="NC_008245.1"/>
</dbReference>
<dbReference type="SMR" id="Q14JD2"/>
<dbReference type="KEGG" id="ftf:FTF0313"/>
<dbReference type="HOGENOM" id="CLU_040318_1_2_6"/>
<dbReference type="GO" id="GO:0022627">
    <property type="term" value="C:cytosolic small ribosomal subunit"/>
    <property type="evidence" value="ECO:0007669"/>
    <property type="project" value="TreeGrafter"/>
</dbReference>
<dbReference type="GO" id="GO:0003735">
    <property type="term" value="F:structural constituent of ribosome"/>
    <property type="evidence" value="ECO:0007669"/>
    <property type="project" value="InterPro"/>
</dbReference>
<dbReference type="GO" id="GO:0006412">
    <property type="term" value="P:translation"/>
    <property type="evidence" value="ECO:0007669"/>
    <property type="project" value="UniProtKB-UniRule"/>
</dbReference>
<dbReference type="CDD" id="cd01425">
    <property type="entry name" value="RPS2"/>
    <property type="match status" value="1"/>
</dbReference>
<dbReference type="FunFam" id="1.10.287.610:FF:000001">
    <property type="entry name" value="30S ribosomal protein S2"/>
    <property type="match status" value="1"/>
</dbReference>
<dbReference type="Gene3D" id="3.40.50.10490">
    <property type="entry name" value="Glucose-6-phosphate isomerase like protein, domain 1"/>
    <property type="match status" value="1"/>
</dbReference>
<dbReference type="Gene3D" id="1.10.287.610">
    <property type="entry name" value="Helix hairpin bin"/>
    <property type="match status" value="1"/>
</dbReference>
<dbReference type="HAMAP" id="MF_00291_B">
    <property type="entry name" value="Ribosomal_uS2_B"/>
    <property type="match status" value="1"/>
</dbReference>
<dbReference type="InterPro" id="IPR001865">
    <property type="entry name" value="Ribosomal_uS2"/>
</dbReference>
<dbReference type="InterPro" id="IPR005706">
    <property type="entry name" value="Ribosomal_uS2_bac/mit/plastid"/>
</dbReference>
<dbReference type="InterPro" id="IPR023591">
    <property type="entry name" value="Ribosomal_uS2_flav_dom_sf"/>
</dbReference>
<dbReference type="NCBIfam" id="TIGR01011">
    <property type="entry name" value="rpsB_bact"/>
    <property type="match status" value="1"/>
</dbReference>
<dbReference type="PANTHER" id="PTHR12534">
    <property type="entry name" value="30S RIBOSOMAL PROTEIN S2 PROKARYOTIC AND ORGANELLAR"/>
    <property type="match status" value="1"/>
</dbReference>
<dbReference type="PANTHER" id="PTHR12534:SF0">
    <property type="entry name" value="SMALL RIBOSOMAL SUBUNIT PROTEIN US2M"/>
    <property type="match status" value="1"/>
</dbReference>
<dbReference type="Pfam" id="PF00318">
    <property type="entry name" value="Ribosomal_S2"/>
    <property type="match status" value="1"/>
</dbReference>
<dbReference type="PRINTS" id="PR00395">
    <property type="entry name" value="RIBOSOMALS2"/>
</dbReference>
<dbReference type="SUPFAM" id="SSF52313">
    <property type="entry name" value="Ribosomal protein S2"/>
    <property type="match status" value="1"/>
</dbReference>
<comment type="similarity">
    <text evidence="1">Belongs to the universal ribosomal protein uS2 family.</text>
</comment>
<name>RS2_FRAT1</name>
<reference key="1">
    <citation type="journal article" date="2007" name="PLoS ONE">
        <title>Genome sequencing shows that European isolates of Francisella tularensis subspecies tularensis are almost identical to US laboratory strain Schu S4.</title>
        <authorList>
            <person name="Chaudhuri R.R."/>
            <person name="Ren C.-P."/>
            <person name="Desmond L."/>
            <person name="Vincent G.A."/>
            <person name="Silman N.J."/>
            <person name="Brehm J.K."/>
            <person name="Elmore M.J."/>
            <person name="Hudson M.J."/>
            <person name="Forsman M."/>
            <person name="Isherwood K.E."/>
            <person name="Gurycova D."/>
            <person name="Minton N.P."/>
            <person name="Titball R.W."/>
            <person name="Pallen M.J."/>
            <person name="Vipond R."/>
        </authorList>
    </citation>
    <scope>NUCLEOTIDE SEQUENCE [LARGE SCALE GENOMIC DNA]</scope>
    <source>
        <strain>FSC 198</strain>
    </source>
</reference>
<organism>
    <name type="scientific">Francisella tularensis subsp. tularensis (strain FSC 198)</name>
    <dbReference type="NCBI Taxonomy" id="393115"/>
    <lineage>
        <taxon>Bacteria</taxon>
        <taxon>Pseudomonadati</taxon>
        <taxon>Pseudomonadota</taxon>
        <taxon>Gammaproteobacteria</taxon>
        <taxon>Thiotrichales</taxon>
        <taxon>Francisellaceae</taxon>
        <taxon>Francisella</taxon>
    </lineage>
</organism>